<geneLocation type="chloroplast"/>
<keyword id="KW-0150">Chloroplast</keyword>
<keyword id="KW-0934">Plastid</keyword>
<keyword id="KW-0687">Ribonucleoprotein</keyword>
<keyword id="KW-0689">Ribosomal protein</keyword>
<dbReference type="EMBL" id="EU118126">
    <property type="protein sequence ID" value="ABV02396.1"/>
    <property type="molecule type" value="Genomic_DNA"/>
</dbReference>
<dbReference type="EMBL" id="EU118126">
    <property type="protein sequence ID" value="ABV02408.1"/>
    <property type="molecule type" value="Genomic_DNA"/>
</dbReference>
<dbReference type="SMR" id="A7Y3K4"/>
<dbReference type="GO" id="GO:0009507">
    <property type="term" value="C:chloroplast"/>
    <property type="evidence" value="ECO:0007669"/>
    <property type="project" value="UniProtKB-SubCell"/>
</dbReference>
<dbReference type="GO" id="GO:1990904">
    <property type="term" value="C:ribonucleoprotein complex"/>
    <property type="evidence" value="ECO:0007669"/>
    <property type="project" value="UniProtKB-KW"/>
</dbReference>
<dbReference type="GO" id="GO:0005840">
    <property type="term" value="C:ribosome"/>
    <property type="evidence" value="ECO:0007669"/>
    <property type="project" value="UniProtKB-KW"/>
</dbReference>
<dbReference type="GO" id="GO:0003735">
    <property type="term" value="F:structural constituent of ribosome"/>
    <property type="evidence" value="ECO:0007669"/>
    <property type="project" value="InterPro"/>
</dbReference>
<dbReference type="GO" id="GO:0006412">
    <property type="term" value="P:translation"/>
    <property type="evidence" value="ECO:0007669"/>
    <property type="project" value="UniProtKB-UniRule"/>
</dbReference>
<dbReference type="CDD" id="cd00353">
    <property type="entry name" value="Ribosomal_S15p_S13e"/>
    <property type="match status" value="1"/>
</dbReference>
<dbReference type="Gene3D" id="1.10.287.10">
    <property type="entry name" value="S15/NS1, RNA-binding"/>
    <property type="match status" value="1"/>
</dbReference>
<dbReference type="HAMAP" id="MF_01343_B">
    <property type="entry name" value="Ribosomal_uS15_B"/>
    <property type="match status" value="1"/>
</dbReference>
<dbReference type="InterPro" id="IPR000589">
    <property type="entry name" value="Ribosomal_uS15"/>
</dbReference>
<dbReference type="InterPro" id="IPR005290">
    <property type="entry name" value="Ribosomal_uS15_bac-type"/>
</dbReference>
<dbReference type="InterPro" id="IPR009068">
    <property type="entry name" value="uS15_NS1_RNA-bd_sf"/>
</dbReference>
<dbReference type="NCBIfam" id="TIGR00952">
    <property type="entry name" value="S15_bact"/>
    <property type="match status" value="1"/>
</dbReference>
<dbReference type="PANTHER" id="PTHR23321">
    <property type="entry name" value="RIBOSOMAL PROTEIN S15, BACTERIAL AND ORGANELLAR"/>
    <property type="match status" value="1"/>
</dbReference>
<dbReference type="PANTHER" id="PTHR23321:SF26">
    <property type="entry name" value="SMALL RIBOSOMAL SUBUNIT PROTEIN US15M"/>
    <property type="match status" value="1"/>
</dbReference>
<dbReference type="Pfam" id="PF00312">
    <property type="entry name" value="Ribosomal_S15"/>
    <property type="match status" value="1"/>
</dbReference>
<dbReference type="SMART" id="SM01387">
    <property type="entry name" value="Ribosomal_S15"/>
    <property type="match status" value="1"/>
</dbReference>
<dbReference type="SUPFAM" id="SSF47060">
    <property type="entry name" value="S15/NS1 RNA-binding domain"/>
    <property type="match status" value="1"/>
</dbReference>
<dbReference type="PROSITE" id="PS00362">
    <property type="entry name" value="RIBOSOMAL_S15"/>
    <property type="match status" value="1"/>
</dbReference>
<comment type="subunit">
    <text evidence="1">Part of the 30S ribosomal subunit.</text>
</comment>
<comment type="subcellular location">
    <subcellularLocation>
        <location>Plastid</location>
        <location>Chloroplast</location>
    </subcellularLocation>
</comment>
<comment type="similarity">
    <text evidence="2">Belongs to the universal ribosomal protein uS15 family.</text>
</comment>
<organism>
    <name type="scientific">Ipomoea purpurea</name>
    <name type="common">Common morning glory</name>
    <name type="synonym">Pharbitis purpurea</name>
    <dbReference type="NCBI Taxonomy" id="4121"/>
    <lineage>
        <taxon>Eukaryota</taxon>
        <taxon>Viridiplantae</taxon>
        <taxon>Streptophyta</taxon>
        <taxon>Embryophyta</taxon>
        <taxon>Tracheophyta</taxon>
        <taxon>Spermatophyta</taxon>
        <taxon>Magnoliopsida</taxon>
        <taxon>eudicotyledons</taxon>
        <taxon>Gunneridae</taxon>
        <taxon>Pentapetalae</taxon>
        <taxon>asterids</taxon>
        <taxon>lamiids</taxon>
        <taxon>Solanales</taxon>
        <taxon>Convolvulaceae</taxon>
        <taxon>Ipomoeeae</taxon>
        <taxon>Ipomoea</taxon>
    </lineage>
</organism>
<reference key="1">
    <citation type="journal article" date="2007" name="BMC Plant Biol.">
        <title>Complete plastid genome sequences suggest strong selection for retention of photosynthetic genes in the parasitic plant genus Cuscuta.</title>
        <authorList>
            <person name="McNeal J.R."/>
            <person name="Kuehl J.V."/>
            <person name="Boore J.L."/>
            <person name="dePamphilis C.W."/>
        </authorList>
    </citation>
    <scope>NUCLEOTIDE SEQUENCE [LARGE SCALE GENOMIC DNA]</scope>
</reference>
<protein>
    <recommendedName>
        <fullName evidence="2">Small ribosomal subunit protein uS15c</fullName>
    </recommendedName>
    <alternativeName>
        <fullName>30S ribosomal protein S15, chloroplastic</fullName>
    </alternativeName>
</protein>
<accession>A7Y3K4</accession>
<evidence type="ECO:0000250" key="1"/>
<evidence type="ECO:0000305" key="2"/>
<sequence>MVKNLFISVISQEETKENRGSVEFQIFNFTNKIQRLTSHLKLHKKDYLSQKGLRKILGKRQRLLAYLSKKNKVRYKELIEKLDIRETKTH</sequence>
<name>RR15_IPOPU</name>
<gene>
    <name type="primary">rps15-A</name>
</gene>
<gene>
    <name type="primary">rps15-B</name>
</gene>
<feature type="chain" id="PRO_0000354261" description="Small ribosomal subunit protein uS15c">
    <location>
        <begin position="1"/>
        <end position="90"/>
    </location>
</feature>
<proteinExistence type="inferred from homology"/>